<organism>
    <name type="scientific">Sphyraena idiastes</name>
    <name type="common">Pelican barracuda</name>
    <dbReference type="NCBI Taxonomy" id="55126"/>
    <lineage>
        <taxon>Eukaryota</taxon>
        <taxon>Metazoa</taxon>
        <taxon>Chordata</taxon>
        <taxon>Craniata</taxon>
        <taxon>Vertebrata</taxon>
        <taxon>Euteleostomi</taxon>
        <taxon>Actinopterygii</taxon>
        <taxon>Neopterygii</taxon>
        <taxon>Teleostei</taxon>
        <taxon>Neoteleostei</taxon>
        <taxon>Acanthomorphata</taxon>
        <taxon>Carangaria</taxon>
        <taxon>Carangaria incertae sedis</taxon>
        <taxon>Sphyraenidae</taxon>
        <taxon>Sphyraena</taxon>
    </lineage>
</organism>
<feature type="initiator methionine" description="Removed" evidence="1">
    <location>
        <position position="1"/>
    </location>
</feature>
<feature type="chain" id="PRO_0000168453" description="L-lactate dehydrogenase A chain">
    <location>
        <begin position="2"/>
        <end position="332"/>
    </location>
</feature>
<feature type="active site" description="Proton acceptor" evidence="1">
    <location>
        <position position="193"/>
    </location>
</feature>
<feature type="binding site" evidence="1">
    <location>
        <begin position="29"/>
        <end position="57"/>
    </location>
    <ligand>
        <name>NAD(+)</name>
        <dbReference type="ChEBI" id="CHEBI:57540"/>
    </ligand>
</feature>
<feature type="binding site" evidence="1">
    <location>
        <position position="99"/>
    </location>
    <ligand>
        <name>NAD(+)</name>
        <dbReference type="ChEBI" id="CHEBI:57540"/>
    </ligand>
</feature>
<feature type="binding site" evidence="1">
    <location>
        <position position="106"/>
    </location>
    <ligand>
        <name>substrate</name>
    </ligand>
</feature>
<feature type="binding site" evidence="1">
    <location>
        <position position="138"/>
    </location>
    <ligand>
        <name>NAD(+)</name>
        <dbReference type="ChEBI" id="CHEBI:57540"/>
    </ligand>
</feature>
<feature type="binding site" evidence="1">
    <location>
        <position position="138"/>
    </location>
    <ligand>
        <name>substrate</name>
    </ligand>
</feature>
<feature type="binding site" evidence="1">
    <location>
        <position position="169"/>
    </location>
    <ligand>
        <name>substrate</name>
    </ligand>
</feature>
<feature type="binding site" evidence="1">
    <location>
        <position position="248"/>
    </location>
    <ligand>
        <name>substrate</name>
    </ligand>
</feature>
<sequence>MSTKEKLINHVMKEEPIGSRNKVTVVGVGMVGMASAVSILLKDLCDELALVDVMEDKLKGEVMDLQHGGLFLKTHKIVGDKDYSVTANSRVVVVTAGARQQEGESRLNLVQRNVNIFKFIIPNIVKYSPNCILMVVSNPVDILTYVAWKLSGFPRHRVIGSGTNLDSARFRHIMGEKLHLHPSSCHGWIVGEHGDSSVPVWSGVNVAGVSLQTLNPKMGAEGDTENWKAVHKMVVDGAYEVIKLKGYTSWAIGMSVADLVESIVKNLHKVHPVSTLVKGMHGVKDEVFLSVPCVLGNSGLTDVIHMTLKPEEEKQLVKSAETLWGVQKELTL</sequence>
<keyword id="KW-0963">Cytoplasm</keyword>
<keyword id="KW-0520">NAD</keyword>
<keyword id="KW-0560">Oxidoreductase</keyword>
<proteinExistence type="evidence at transcript level"/>
<protein>
    <recommendedName>
        <fullName>L-lactate dehydrogenase A chain</fullName>
        <shortName>LDH-A</shortName>
        <ecNumber evidence="2">1.1.1.27</ecNumber>
    </recommendedName>
</protein>
<gene>
    <name type="primary">ldha</name>
</gene>
<dbReference type="EC" id="1.1.1.27" evidence="2"/>
<dbReference type="EMBL" id="U80001">
    <property type="protein sequence ID" value="AAB38887.1"/>
    <property type="molecule type" value="mRNA"/>
</dbReference>
<dbReference type="SMR" id="O13277"/>
<dbReference type="BRENDA" id="1.1.1.27">
    <property type="organism ID" value="5808"/>
</dbReference>
<dbReference type="SABIO-RK" id="O13277"/>
<dbReference type="UniPathway" id="UPA00554">
    <property type="reaction ID" value="UER00611"/>
</dbReference>
<dbReference type="GO" id="GO:0005737">
    <property type="term" value="C:cytoplasm"/>
    <property type="evidence" value="ECO:0007669"/>
    <property type="project" value="UniProtKB-SubCell"/>
</dbReference>
<dbReference type="GO" id="GO:0004459">
    <property type="term" value="F:L-lactate dehydrogenase activity"/>
    <property type="evidence" value="ECO:0007669"/>
    <property type="project" value="UniProtKB-EC"/>
</dbReference>
<dbReference type="GO" id="GO:0006089">
    <property type="term" value="P:lactate metabolic process"/>
    <property type="evidence" value="ECO:0007669"/>
    <property type="project" value="TreeGrafter"/>
</dbReference>
<dbReference type="CDD" id="cd05293">
    <property type="entry name" value="LDH_1"/>
    <property type="match status" value="1"/>
</dbReference>
<dbReference type="FunFam" id="3.40.50.720:FF:000029">
    <property type="entry name" value="L-lactate dehydrogenase A chain"/>
    <property type="match status" value="1"/>
</dbReference>
<dbReference type="FunFam" id="3.90.110.10:FF:000003">
    <property type="entry name" value="L-lactate dehydrogenase A chain"/>
    <property type="match status" value="1"/>
</dbReference>
<dbReference type="Gene3D" id="3.90.110.10">
    <property type="entry name" value="Lactate dehydrogenase/glycoside hydrolase, family 4, C-terminal"/>
    <property type="match status" value="1"/>
</dbReference>
<dbReference type="Gene3D" id="3.40.50.720">
    <property type="entry name" value="NAD(P)-binding Rossmann-like Domain"/>
    <property type="match status" value="1"/>
</dbReference>
<dbReference type="HAMAP" id="MF_00488">
    <property type="entry name" value="Lactate_dehydrog"/>
    <property type="match status" value="1"/>
</dbReference>
<dbReference type="InterPro" id="IPR001557">
    <property type="entry name" value="L-lactate/malate_DH"/>
</dbReference>
<dbReference type="InterPro" id="IPR011304">
    <property type="entry name" value="L-lactate_DH"/>
</dbReference>
<dbReference type="InterPro" id="IPR018177">
    <property type="entry name" value="L-lactate_DH_AS"/>
</dbReference>
<dbReference type="InterPro" id="IPR022383">
    <property type="entry name" value="Lactate/malate_DH_C"/>
</dbReference>
<dbReference type="InterPro" id="IPR001236">
    <property type="entry name" value="Lactate/malate_DH_N"/>
</dbReference>
<dbReference type="InterPro" id="IPR015955">
    <property type="entry name" value="Lactate_DH/Glyco_Ohase_4_C"/>
</dbReference>
<dbReference type="InterPro" id="IPR036291">
    <property type="entry name" value="NAD(P)-bd_dom_sf"/>
</dbReference>
<dbReference type="NCBIfam" id="TIGR01771">
    <property type="entry name" value="L-LDH-NAD"/>
    <property type="match status" value="1"/>
</dbReference>
<dbReference type="PANTHER" id="PTHR43128">
    <property type="entry name" value="L-2-HYDROXYCARBOXYLATE DEHYDROGENASE (NAD(P)(+))"/>
    <property type="match status" value="1"/>
</dbReference>
<dbReference type="PANTHER" id="PTHR43128:SF10">
    <property type="entry name" value="L-LACTATE DEHYDROGENASE A CHAIN"/>
    <property type="match status" value="1"/>
</dbReference>
<dbReference type="Pfam" id="PF02866">
    <property type="entry name" value="Ldh_1_C"/>
    <property type="match status" value="1"/>
</dbReference>
<dbReference type="Pfam" id="PF00056">
    <property type="entry name" value="Ldh_1_N"/>
    <property type="match status" value="1"/>
</dbReference>
<dbReference type="PIRSF" id="PIRSF000102">
    <property type="entry name" value="Lac_mal_DH"/>
    <property type="match status" value="1"/>
</dbReference>
<dbReference type="PRINTS" id="PR00086">
    <property type="entry name" value="LLDHDRGNASE"/>
</dbReference>
<dbReference type="SUPFAM" id="SSF56327">
    <property type="entry name" value="LDH C-terminal domain-like"/>
    <property type="match status" value="1"/>
</dbReference>
<dbReference type="SUPFAM" id="SSF51735">
    <property type="entry name" value="NAD(P)-binding Rossmann-fold domains"/>
    <property type="match status" value="1"/>
</dbReference>
<dbReference type="PROSITE" id="PS00064">
    <property type="entry name" value="L_LDH"/>
    <property type="match status" value="1"/>
</dbReference>
<name>LDHA_SPHID</name>
<evidence type="ECO:0000250" key="1"/>
<evidence type="ECO:0000250" key="2">
    <source>
        <dbReference type="UniProtKB" id="P00338"/>
    </source>
</evidence>
<evidence type="ECO:0000305" key="3"/>
<reference key="1">
    <citation type="journal article" date="1997" name="Biochemistry">
        <title>Evolution of lactate dehydrogenase-A homologs of barracuda fishes (genus Sphyraena) from different thermal environments: differences in kinetic properties and thermal stability are due to amino acid substitutions outside the active site.</title>
        <authorList>
            <person name="Holland L.Z."/>
            <person name="McFall-Ngai M."/>
            <person name="Somero G.N."/>
        </authorList>
    </citation>
    <scope>NUCLEOTIDE SEQUENCE [MRNA]</scope>
    <source>
        <tissue>Skeletal muscle</tissue>
    </source>
</reference>
<accession>O13277</accession>
<comment type="function">
    <text evidence="2">Interconverts simultaneously and stereospecifically pyruvate and lactate with concomitant interconversion of NADH and NAD(+).</text>
</comment>
<comment type="catalytic activity">
    <reaction evidence="2">
        <text>(S)-lactate + NAD(+) = pyruvate + NADH + H(+)</text>
        <dbReference type="Rhea" id="RHEA:23444"/>
        <dbReference type="ChEBI" id="CHEBI:15361"/>
        <dbReference type="ChEBI" id="CHEBI:15378"/>
        <dbReference type="ChEBI" id="CHEBI:16651"/>
        <dbReference type="ChEBI" id="CHEBI:57540"/>
        <dbReference type="ChEBI" id="CHEBI:57945"/>
        <dbReference type="EC" id="1.1.1.27"/>
    </reaction>
    <physiologicalReaction direction="left-to-right" evidence="2">
        <dbReference type="Rhea" id="RHEA:23445"/>
    </physiologicalReaction>
    <physiologicalReaction direction="right-to-left" evidence="2">
        <dbReference type="Rhea" id="RHEA:23446"/>
    </physiologicalReaction>
</comment>
<comment type="pathway">
    <text evidence="2">Fermentation; pyruvate fermentation to lactate; (S)-lactate from pyruvate: step 1/1.</text>
</comment>
<comment type="subunit">
    <text evidence="1">Homotetramer.</text>
</comment>
<comment type="subcellular location">
    <subcellularLocation>
        <location evidence="1">Cytoplasm</location>
    </subcellularLocation>
</comment>
<comment type="similarity">
    <text evidence="3">Belongs to the LDH/MDH superfamily. LDH family.</text>
</comment>